<evidence type="ECO:0000250" key="1"/>
<evidence type="ECO:0000255" key="2"/>
<evidence type="ECO:0000269" key="3">
    <source>
    </source>
</evidence>
<evidence type="ECO:0000305" key="4"/>
<feature type="chain" id="PRO_0000198903" description="Rho-related protein racF1">
    <location>
        <begin position="1"/>
        <end position="190"/>
    </location>
</feature>
<feature type="propeptide" id="PRO_0000281252" description="Removed in mature form" evidence="1">
    <location>
        <begin position="191"/>
        <end position="193"/>
    </location>
</feature>
<feature type="short sequence motif" description="Effector region" evidence="2">
    <location>
        <begin position="32"/>
        <end position="40"/>
    </location>
</feature>
<feature type="binding site" evidence="1">
    <location>
        <begin position="10"/>
        <end position="17"/>
    </location>
    <ligand>
        <name>GTP</name>
        <dbReference type="ChEBI" id="CHEBI:37565"/>
    </ligand>
</feature>
<feature type="binding site" evidence="1">
    <location>
        <begin position="57"/>
        <end position="61"/>
    </location>
    <ligand>
        <name>GTP</name>
        <dbReference type="ChEBI" id="CHEBI:37565"/>
    </ligand>
</feature>
<feature type="binding site" evidence="1">
    <location>
        <begin position="115"/>
        <end position="118"/>
    </location>
    <ligand>
        <name>GTP</name>
        <dbReference type="ChEBI" id="CHEBI:37565"/>
    </ligand>
</feature>
<feature type="modified residue" description="Cysteine methyl ester" evidence="1">
    <location>
        <position position="190"/>
    </location>
</feature>
<feature type="lipid moiety-binding region" description="S-geranylgeranyl cysteine" evidence="1">
    <location>
        <position position="190"/>
    </location>
</feature>
<reference key="1">
    <citation type="journal article" date="1999" name="Mol. Biol. Cell">
        <title>RacF1, a novel member of the Rho protein family in Dictyostelium discoideum, associates transiently with cell contact areas, macropinosomes and phagosomes.</title>
        <authorList>
            <person name="Rivero F."/>
            <person name="Albrecht R."/>
            <person name="Dislich H."/>
            <person name="Bracco E."/>
            <person name="Graciotti L."/>
            <person name="Bozzaro S."/>
            <person name="Noegel A.A."/>
        </authorList>
    </citation>
    <scope>NUCLEOTIDE SEQUENCE [GENOMIC DNA]</scope>
</reference>
<reference key="2">
    <citation type="journal article" date="2005" name="Nature">
        <title>The genome of the social amoeba Dictyostelium discoideum.</title>
        <authorList>
            <person name="Eichinger L."/>
            <person name="Pachebat J.A."/>
            <person name="Gloeckner G."/>
            <person name="Rajandream M.A."/>
            <person name="Sucgang R."/>
            <person name="Berriman M."/>
            <person name="Song J."/>
            <person name="Olsen R."/>
            <person name="Szafranski K."/>
            <person name="Xu Q."/>
            <person name="Tunggal B."/>
            <person name="Kummerfeld S."/>
            <person name="Madera M."/>
            <person name="Konfortov B.A."/>
            <person name="Rivero F."/>
            <person name="Bankier A.T."/>
            <person name="Lehmann R."/>
            <person name="Hamlin N."/>
            <person name="Davies R."/>
            <person name="Gaudet P."/>
            <person name="Fey P."/>
            <person name="Pilcher K."/>
            <person name="Chen G."/>
            <person name="Saunders D."/>
            <person name="Sodergren E.J."/>
            <person name="Davis P."/>
            <person name="Kerhornou A."/>
            <person name="Nie X."/>
            <person name="Hall N."/>
            <person name="Anjard C."/>
            <person name="Hemphill L."/>
            <person name="Bason N."/>
            <person name="Farbrother P."/>
            <person name="Desany B."/>
            <person name="Just E."/>
            <person name="Morio T."/>
            <person name="Rost R."/>
            <person name="Churcher C.M."/>
            <person name="Cooper J."/>
            <person name="Haydock S."/>
            <person name="van Driessche N."/>
            <person name="Cronin A."/>
            <person name="Goodhead I."/>
            <person name="Muzny D.M."/>
            <person name="Mourier T."/>
            <person name="Pain A."/>
            <person name="Lu M."/>
            <person name="Harper D."/>
            <person name="Lindsay R."/>
            <person name="Hauser H."/>
            <person name="James K.D."/>
            <person name="Quiles M."/>
            <person name="Madan Babu M."/>
            <person name="Saito T."/>
            <person name="Buchrieser C."/>
            <person name="Wardroper A."/>
            <person name="Felder M."/>
            <person name="Thangavelu M."/>
            <person name="Johnson D."/>
            <person name="Knights A."/>
            <person name="Loulseged H."/>
            <person name="Mungall K.L."/>
            <person name="Oliver K."/>
            <person name="Price C."/>
            <person name="Quail M.A."/>
            <person name="Urushihara H."/>
            <person name="Hernandez J."/>
            <person name="Rabbinowitsch E."/>
            <person name="Steffen D."/>
            <person name="Sanders M."/>
            <person name="Ma J."/>
            <person name="Kohara Y."/>
            <person name="Sharp S."/>
            <person name="Simmonds M.N."/>
            <person name="Spiegler S."/>
            <person name="Tivey A."/>
            <person name="Sugano S."/>
            <person name="White B."/>
            <person name="Walker D."/>
            <person name="Woodward J.R."/>
            <person name="Winckler T."/>
            <person name="Tanaka Y."/>
            <person name="Shaulsky G."/>
            <person name="Schleicher M."/>
            <person name="Weinstock G.M."/>
            <person name="Rosenthal A."/>
            <person name="Cox E.C."/>
            <person name="Chisholm R.L."/>
            <person name="Gibbs R.A."/>
            <person name="Loomis W.F."/>
            <person name="Platzer M."/>
            <person name="Kay R.R."/>
            <person name="Williams J.G."/>
            <person name="Dear P.H."/>
            <person name="Noegel A.A."/>
            <person name="Barrell B.G."/>
            <person name="Kuspa A."/>
        </authorList>
    </citation>
    <scope>NUCLEOTIDE SEQUENCE [LARGE SCALE GENOMIC DNA]</scope>
    <source>
        <strain>AX4</strain>
    </source>
</reference>
<reference key="3">
    <citation type="journal article" date="2005" name="Mol. Biol. Cell">
        <title>Cellular distribution and functions of wild-type and constitutively activated Dictyostelium PakB.</title>
        <authorList>
            <person name="de la Roche M."/>
            <person name="Mahasneh A."/>
            <person name="Lee S.-F."/>
            <person name="Rivero F."/>
            <person name="Cote G.P."/>
        </authorList>
    </citation>
    <scope>INTERACTION WITH PAKB</scope>
</reference>
<name>RACF1_DICDI</name>
<comment type="function">
    <text>Might act in concert and/or share functions with other members of the RHO family in the regulation of a subset of cytoskeletal rearrangements that are required for these processes.</text>
</comment>
<comment type="subunit">
    <text evidence="3">Interacts with pakB.</text>
</comment>
<comment type="subcellular location">
    <subcellularLocation>
        <location>Membrane</location>
        <topology>Lipid-anchor</topology>
    </subcellularLocation>
</comment>
<comment type="similarity">
    <text evidence="4">Belongs to the small GTPase superfamily. Rho family.</text>
</comment>
<accession>O96390</accession>
<accession>Q55DR0</accession>
<organism>
    <name type="scientific">Dictyostelium discoideum</name>
    <name type="common">Social amoeba</name>
    <dbReference type="NCBI Taxonomy" id="44689"/>
    <lineage>
        <taxon>Eukaryota</taxon>
        <taxon>Amoebozoa</taxon>
        <taxon>Evosea</taxon>
        <taxon>Eumycetozoa</taxon>
        <taxon>Dictyostelia</taxon>
        <taxon>Dictyosteliales</taxon>
        <taxon>Dictyosteliaceae</taxon>
        <taxon>Dictyostelium</taxon>
    </lineage>
</organism>
<sequence>MQNIKCVVVGDGAVGKTCMLISYTTNGFPSEYIPTVFDNYCANLMLEGKPYSLGLWDTAGQEDYDRLRPLSYPHTDVFLICFSIISQASFENVTTKWFKEVNHHAPGVPIILVGTKQDIRNDNDSIKKLKEKNIELVPYEKGLEKAKEINAIYLEASALTQRGIKDVFDQCIRSVIYPNKLIKKPKKKSCTIM</sequence>
<gene>
    <name type="primary">racF1</name>
    <name type="ORF">DDB_G0269176</name>
</gene>
<proteinExistence type="evidence at protein level"/>
<protein>
    <recommendedName>
        <fullName>Rho-related protein racF1</fullName>
    </recommendedName>
</protein>
<keyword id="KW-0342">GTP-binding</keyword>
<keyword id="KW-0449">Lipoprotein</keyword>
<keyword id="KW-0472">Membrane</keyword>
<keyword id="KW-0488">Methylation</keyword>
<keyword id="KW-0547">Nucleotide-binding</keyword>
<keyword id="KW-0636">Prenylation</keyword>
<keyword id="KW-1185">Reference proteome</keyword>
<dbReference type="EMBL" id="AF037042">
    <property type="protein sequence ID" value="AAD09143.1"/>
    <property type="molecule type" value="Genomic_DNA"/>
</dbReference>
<dbReference type="EMBL" id="AAFI02000005">
    <property type="protein sequence ID" value="EAL71938.1"/>
    <property type="molecule type" value="Genomic_DNA"/>
</dbReference>
<dbReference type="RefSeq" id="XP_646071.1">
    <property type="nucleotide sequence ID" value="XM_640979.1"/>
</dbReference>
<dbReference type="SMR" id="O96390"/>
<dbReference type="FunCoup" id="O96390">
    <property type="interactions" value="58"/>
</dbReference>
<dbReference type="IntAct" id="O96390">
    <property type="interactions" value="1"/>
</dbReference>
<dbReference type="STRING" id="44689.O96390"/>
<dbReference type="PaxDb" id="44689-DDB0215399"/>
<dbReference type="EnsemblProtists" id="EAL71938">
    <property type="protein sequence ID" value="EAL71938"/>
    <property type="gene ID" value="DDB_G0269176"/>
</dbReference>
<dbReference type="GeneID" id="8617020"/>
<dbReference type="KEGG" id="ddi:DDB_G0269176"/>
<dbReference type="dictyBase" id="DDB_G0269176">
    <property type="gene designation" value="racF1"/>
</dbReference>
<dbReference type="VEuPathDB" id="AmoebaDB:DDB_G0269176"/>
<dbReference type="eggNOG" id="KOG0393">
    <property type="taxonomic scope" value="Eukaryota"/>
</dbReference>
<dbReference type="HOGENOM" id="CLU_041217_21_3_1"/>
<dbReference type="InParanoid" id="O96390"/>
<dbReference type="OMA" id="PRHKDVT"/>
<dbReference type="PhylomeDB" id="O96390"/>
<dbReference type="Reactome" id="R-DDI-6798695">
    <property type="pathway name" value="Neutrophil degranulation"/>
</dbReference>
<dbReference type="Reactome" id="R-DDI-9013404">
    <property type="pathway name" value="RAC2 GTPase cycle"/>
</dbReference>
<dbReference type="Reactome" id="R-DDI-9013407">
    <property type="pathway name" value="RHOH GTPase cycle"/>
</dbReference>
<dbReference type="Reactome" id="R-DDI-9013408">
    <property type="pathway name" value="RHOG GTPase cycle"/>
</dbReference>
<dbReference type="Reactome" id="R-DDI-9013418">
    <property type="pathway name" value="RHOBTB2 GTPase cycle"/>
</dbReference>
<dbReference type="Reactome" id="R-DDI-9013422">
    <property type="pathway name" value="RHOBTB1 GTPase cycle"/>
</dbReference>
<dbReference type="PRO" id="PR:O96390"/>
<dbReference type="Proteomes" id="UP000002195">
    <property type="component" value="Chromosome 1"/>
</dbReference>
<dbReference type="GO" id="GO:0005938">
    <property type="term" value="C:cell cortex"/>
    <property type="evidence" value="ECO:0000314"/>
    <property type="project" value="dictyBase"/>
</dbReference>
<dbReference type="GO" id="GO:0042995">
    <property type="term" value="C:cell projection"/>
    <property type="evidence" value="ECO:0000318"/>
    <property type="project" value="GO_Central"/>
</dbReference>
<dbReference type="GO" id="GO:0005737">
    <property type="term" value="C:cytoplasm"/>
    <property type="evidence" value="ECO:0000314"/>
    <property type="project" value="dictyBase"/>
</dbReference>
<dbReference type="GO" id="GO:0031410">
    <property type="term" value="C:cytoplasmic vesicle"/>
    <property type="evidence" value="ECO:0000318"/>
    <property type="project" value="GO_Central"/>
</dbReference>
<dbReference type="GO" id="GO:0005856">
    <property type="term" value="C:cytoskeleton"/>
    <property type="evidence" value="ECO:0000318"/>
    <property type="project" value="GO_Central"/>
</dbReference>
<dbReference type="GO" id="GO:0044354">
    <property type="term" value="C:macropinosome"/>
    <property type="evidence" value="ECO:0000314"/>
    <property type="project" value="dictyBase"/>
</dbReference>
<dbReference type="GO" id="GO:0001891">
    <property type="term" value="C:phagocytic cup"/>
    <property type="evidence" value="ECO:0000314"/>
    <property type="project" value="dictyBase"/>
</dbReference>
<dbReference type="GO" id="GO:0005886">
    <property type="term" value="C:plasma membrane"/>
    <property type="evidence" value="ECO:0000318"/>
    <property type="project" value="GO_Central"/>
</dbReference>
<dbReference type="GO" id="GO:0005525">
    <property type="term" value="F:GTP binding"/>
    <property type="evidence" value="ECO:0000318"/>
    <property type="project" value="GO_Central"/>
</dbReference>
<dbReference type="GO" id="GO:0003924">
    <property type="term" value="F:GTPase activity"/>
    <property type="evidence" value="ECO:0000318"/>
    <property type="project" value="GO_Central"/>
</dbReference>
<dbReference type="GO" id="GO:0019901">
    <property type="term" value="F:protein kinase binding"/>
    <property type="evidence" value="ECO:0000353"/>
    <property type="project" value="dictyBase"/>
</dbReference>
<dbReference type="GO" id="GO:0007015">
    <property type="term" value="P:actin filament organization"/>
    <property type="evidence" value="ECO:0000318"/>
    <property type="project" value="GO_Central"/>
</dbReference>
<dbReference type="GO" id="GO:0030865">
    <property type="term" value="P:cortical cytoskeleton organization"/>
    <property type="evidence" value="ECO:0000318"/>
    <property type="project" value="GO_Central"/>
</dbReference>
<dbReference type="GO" id="GO:0007163">
    <property type="term" value="P:establishment or maintenance of cell polarity"/>
    <property type="evidence" value="ECO:0000318"/>
    <property type="project" value="GO_Central"/>
</dbReference>
<dbReference type="GO" id="GO:0000281">
    <property type="term" value="P:mitotic cytokinesis"/>
    <property type="evidence" value="ECO:0000318"/>
    <property type="project" value="GO_Central"/>
</dbReference>
<dbReference type="GO" id="GO:0032956">
    <property type="term" value="P:regulation of actin cytoskeleton organization"/>
    <property type="evidence" value="ECO:0000318"/>
    <property type="project" value="GO_Central"/>
</dbReference>
<dbReference type="GO" id="GO:0008360">
    <property type="term" value="P:regulation of cell shape"/>
    <property type="evidence" value="ECO:0000318"/>
    <property type="project" value="GO_Central"/>
</dbReference>
<dbReference type="GO" id="GO:1902351">
    <property type="term" value="P:response to imidacloprid"/>
    <property type="evidence" value="ECO:0000270"/>
    <property type="project" value="dictyBase"/>
</dbReference>
<dbReference type="GO" id="GO:0019953">
    <property type="term" value="P:sexual reproduction"/>
    <property type="evidence" value="ECO:0000270"/>
    <property type="project" value="dictyBase"/>
</dbReference>
<dbReference type="GO" id="GO:0007165">
    <property type="term" value="P:signal transduction"/>
    <property type="evidence" value="ECO:0000318"/>
    <property type="project" value="GO_Central"/>
</dbReference>
<dbReference type="GO" id="GO:0007264">
    <property type="term" value="P:small GTPase-mediated signal transduction"/>
    <property type="evidence" value="ECO:0007669"/>
    <property type="project" value="InterPro"/>
</dbReference>
<dbReference type="CDD" id="cd00157">
    <property type="entry name" value="Rho"/>
    <property type="match status" value="1"/>
</dbReference>
<dbReference type="FunFam" id="3.40.50.300:FF:000118">
    <property type="entry name" value="Rho-related GTP-binding protein RhoG"/>
    <property type="match status" value="1"/>
</dbReference>
<dbReference type="Gene3D" id="3.40.50.300">
    <property type="entry name" value="P-loop containing nucleotide triphosphate hydrolases"/>
    <property type="match status" value="1"/>
</dbReference>
<dbReference type="InterPro" id="IPR027417">
    <property type="entry name" value="P-loop_NTPase"/>
</dbReference>
<dbReference type="InterPro" id="IPR005225">
    <property type="entry name" value="Small_GTP-bd"/>
</dbReference>
<dbReference type="InterPro" id="IPR001806">
    <property type="entry name" value="Small_GTPase"/>
</dbReference>
<dbReference type="InterPro" id="IPR003578">
    <property type="entry name" value="Small_GTPase_Rho"/>
</dbReference>
<dbReference type="NCBIfam" id="TIGR00231">
    <property type="entry name" value="small_GTP"/>
    <property type="match status" value="1"/>
</dbReference>
<dbReference type="PANTHER" id="PTHR24072">
    <property type="entry name" value="RHO FAMILY GTPASE"/>
    <property type="match status" value="1"/>
</dbReference>
<dbReference type="Pfam" id="PF00071">
    <property type="entry name" value="Ras"/>
    <property type="match status" value="1"/>
</dbReference>
<dbReference type="PRINTS" id="PR00449">
    <property type="entry name" value="RASTRNSFRMNG"/>
</dbReference>
<dbReference type="SMART" id="SM00175">
    <property type="entry name" value="RAB"/>
    <property type="match status" value="1"/>
</dbReference>
<dbReference type="SMART" id="SM00173">
    <property type="entry name" value="RAS"/>
    <property type="match status" value="1"/>
</dbReference>
<dbReference type="SMART" id="SM00174">
    <property type="entry name" value="RHO"/>
    <property type="match status" value="1"/>
</dbReference>
<dbReference type="SUPFAM" id="SSF52540">
    <property type="entry name" value="P-loop containing nucleoside triphosphate hydrolases"/>
    <property type="match status" value="1"/>
</dbReference>
<dbReference type="PROSITE" id="PS51420">
    <property type="entry name" value="RHO"/>
    <property type="match status" value="1"/>
</dbReference>